<accession>Q75DX9</accession>
<gene>
    <name type="primary">LYS4</name>
    <name type="ordered locus">ABL106C</name>
</gene>
<proteinExistence type="inferred from homology"/>
<protein>
    <recommendedName>
        <fullName>Homoaconitase, mitochondrial</fullName>
        <ecNumber>4.2.1.36</ecNumber>
    </recommendedName>
    <alternativeName>
        <fullName>Homoaconitate hydratase</fullName>
    </alternativeName>
</protein>
<feature type="transit peptide" description="Mitochondrion" evidence="2">
    <location>
        <begin position="1"/>
        <end position="17"/>
    </location>
</feature>
<feature type="chain" id="PRO_0000247915" description="Homoaconitase, mitochondrial">
    <location>
        <begin position="18"/>
        <end position="686"/>
    </location>
</feature>
<feature type="binding site" evidence="1">
    <location>
        <position position="337"/>
    </location>
    <ligand>
        <name>[4Fe-4S] cluster</name>
        <dbReference type="ChEBI" id="CHEBI:49883"/>
    </ligand>
</feature>
<feature type="binding site" evidence="1">
    <location>
        <position position="401"/>
    </location>
    <ligand>
        <name>[4Fe-4S] cluster</name>
        <dbReference type="ChEBI" id="CHEBI:49883"/>
    </ligand>
</feature>
<feature type="binding site" evidence="1">
    <location>
        <position position="404"/>
    </location>
    <ligand>
        <name>[4Fe-4S] cluster</name>
        <dbReference type="ChEBI" id="CHEBI:49883"/>
    </ligand>
</feature>
<sequence>MRVVRCVRRFSASRAVSGQNTTEKIVQAHAVGLRPGHRVASGDYVSIRPAHCMSHDNSWPVALKFMGLGATRVHDARQVVCTLDHDVQNRSEKNLAKYRNIELFAAQQGVDFYPARRGIGHQIMVEEGYAFPLGLTVASDSHSNTYGGVGALGTPVVRTDAAAIWATGQTWWQVPPVARVELTGELPAGVSGKDAIVALCGVFGRDEVLNHAVEFAGPGVARLTVEQRLTVANMTTEWGALSGLFPVDGVLLDWYREQVARAPAGHARLTAARVDALAERAAAMQPDTDARYAKQLTLDLSSLTHYVSGPNSVKVARPIAELAPQQLRIDKAYLLSCTNGRLEDLEAAAAVLRADGSVRQVAPGVEFYIAAASAEVEAQARARGTWDVLLSAGCIPLPSGCGPCIGLGKGLLEAGEVGISATNRNFRGRMGSKDAEAYLASPAVVAASAVLGRIAAPCEVLGLSPPAAPAVRASVAQCGAPAAADGAAAAVEVLPGFPRAITGELVLCDADNINTDGIYPGKYTYEDDIPRETMARVCMENYDLDFQHNVHAGDIVVGGYNFGTGSSREQAATALLAKGVPLVVAGSFSNTFSRNAINNALLTLELPALLQLLRERYADAPSQATRRTGVFLTWDVAAATVTVTVGSPTGERVLHQRVGEFSANLQEIIVKGGLEGWVKHALAQSA</sequence>
<organism>
    <name type="scientific">Eremothecium gossypii (strain ATCC 10895 / CBS 109.51 / FGSC 9923 / NRRL Y-1056)</name>
    <name type="common">Yeast</name>
    <name type="synonym">Ashbya gossypii</name>
    <dbReference type="NCBI Taxonomy" id="284811"/>
    <lineage>
        <taxon>Eukaryota</taxon>
        <taxon>Fungi</taxon>
        <taxon>Dikarya</taxon>
        <taxon>Ascomycota</taxon>
        <taxon>Saccharomycotina</taxon>
        <taxon>Saccharomycetes</taxon>
        <taxon>Saccharomycetales</taxon>
        <taxon>Saccharomycetaceae</taxon>
        <taxon>Eremothecium</taxon>
    </lineage>
</organism>
<comment type="function">
    <text evidence="1">Catalyzes the reversible hydration of cis-homoaconitate to (2R,3S)-homoisocitrate, a step in the alpha-aminoadipate pathway for lysine biosynthesis.</text>
</comment>
<comment type="catalytic activity">
    <reaction>
        <text>(2R,3S)-homoisocitrate = cis-homoaconitate + H2O</text>
        <dbReference type="Rhea" id="RHEA:15485"/>
        <dbReference type="ChEBI" id="CHEBI:15377"/>
        <dbReference type="ChEBI" id="CHEBI:15404"/>
        <dbReference type="ChEBI" id="CHEBI:58174"/>
        <dbReference type="EC" id="4.2.1.36"/>
    </reaction>
</comment>
<comment type="cofactor">
    <cofactor evidence="1">
        <name>[4Fe-4S] cluster</name>
        <dbReference type="ChEBI" id="CHEBI:49883"/>
    </cofactor>
    <text evidence="1">Binds 1 [4Fe-4S] cluster per subunit.</text>
</comment>
<comment type="pathway">
    <text>Amino-acid biosynthesis; L-lysine biosynthesis via AAA pathway; L-alpha-aminoadipate from 2-oxoglutarate: step 3/5.</text>
</comment>
<comment type="subcellular location">
    <subcellularLocation>
        <location evidence="1">Mitochondrion</location>
    </subcellularLocation>
</comment>
<comment type="similarity">
    <text evidence="3">Belongs to the aconitase/IPM isomerase family.</text>
</comment>
<name>LYS4_EREGS</name>
<reference key="1">
    <citation type="journal article" date="2004" name="Science">
        <title>The Ashbya gossypii genome as a tool for mapping the ancient Saccharomyces cerevisiae genome.</title>
        <authorList>
            <person name="Dietrich F.S."/>
            <person name="Voegeli S."/>
            <person name="Brachat S."/>
            <person name="Lerch A."/>
            <person name="Gates K."/>
            <person name="Steiner S."/>
            <person name="Mohr C."/>
            <person name="Poehlmann R."/>
            <person name="Luedi P."/>
            <person name="Choi S."/>
            <person name="Wing R.A."/>
            <person name="Flavier A."/>
            <person name="Gaffney T.D."/>
            <person name="Philippsen P."/>
        </authorList>
    </citation>
    <scope>NUCLEOTIDE SEQUENCE [LARGE SCALE GENOMIC DNA]</scope>
    <source>
        <strain>ATCC 10895 / CBS 109.51 / FGSC 9923 / NRRL Y-1056</strain>
    </source>
</reference>
<reference key="2">
    <citation type="journal article" date="2013" name="G3 (Bethesda)">
        <title>Genomes of Ashbya fungi isolated from insects reveal four mating-type loci, numerous translocations, lack of transposons, and distinct gene duplications.</title>
        <authorList>
            <person name="Dietrich F.S."/>
            <person name="Voegeli S."/>
            <person name="Kuo S."/>
            <person name="Philippsen P."/>
        </authorList>
    </citation>
    <scope>GENOME REANNOTATION</scope>
    <scope>SEQUENCE REVISION TO 357</scope>
    <source>
        <strain>ATCC 10895 / CBS 109.51 / FGSC 9923 / NRRL Y-1056</strain>
    </source>
</reference>
<dbReference type="EC" id="4.2.1.36"/>
<dbReference type="EMBL" id="AE016815">
    <property type="protein sequence ID" value="AAS50665.2"/>
    <property type="molecule type" value="Genomic_DNA"/>
</dbReference>
<dbReference type="RefSeq" id="NP_982841.2">
    <property type="nucleotide sequence ID" value="NM_208194.2"/>
</dbReference>
<dbReference type="SMR" id="Q75DX9"/>
<dbReference type="FunCoup" id="Q75DX9">
    <property type="interactions" value="154"/>
</dbReference>
<dbReference type="STRING" id="284811.Q75DX9"/>
<dbReference type="EnsemblFungi" id="AAS50665">
    <property type="protein sequence ID" value="AAS50665"/>
    <property type="gene ID" value="AGOS_ABL106C"/>
</dbReference>
<dbReference type="GeneID" id="4618921"/>
<dbReference type="KEGG" id="ago:AGOS_ABL106C"/>
<dbReference type="eggNOG" id="KOG0453">
    <property type="taxonomic scope" value="Eukaryota"/>
</dbReference>
<dbReference type="HOGENOM" id="CLU_006714_3_1_1"/>
<dbReference type="InParanoid" id="Q75DX9"/>
<dbReference type="OMA" id="LCDADNI"/>
<dbReference type="OrthoDB" id="10262323at2759"/>
<dbReference type="UniPathway" id="UPA00033">
    <property type="reaction ID" value="UER01027"/>
</dbReference>
<dbReference type="Proteomes" id="UP000000591">
    <property type="component" value="Chromosome II"/>
</dbReference>
<dbReference type="GO" id="GO:0005759">
    <property type="term" value="C:mitochondrial matrix"/>
    <property type="evidence" value="ECO:0007669"/>
    <property type="project" value="EnsemblFungi"/>
</dbReference>
<dbReference type="GO" id="GO:0051539">
    <property type="term" value="F:4 iron, 4 sulfur cluster binding"/>
    <property type="evidence" value="ECO:0007669"/>
    <property type="project" value="InterPro"/>
</dbReference>
<dbReference type="GO" id="GO:0004409">
    <property type="term" value="F:homoaconitate hydratase activity"/>
    <property type="evidence" value="ECO:0007669"/>
    <property type="project" value="UniProtKB-EC"/>
</dbReference>
<dbReference type="GO" id="GO:0046872">
    <property type="term" value="F:metal ion binding"/>
    <property type="evidence" value="ECO:0007669"/>
    <property type="project" value="UniProtKB-KW"/>
</dbReference>
<dbReference type="GO" id="GO:0019878">
    <property type="term" value="P:lysine biosynthetic process via aminoadipic acid"/>
    <property type="evidence" value="ECO:0007669"/>
    <property type="project" value="UniProtKB-UniPathway"/>
</dbReference>
<dbReference type="CDD" id="cd01674">
    <property type="entry name" value="Homoaconitase_Swivel"/>
    <property type="match status" value="1"/>
</dbReference>
<dbReference type="Gene3D" id="3.30.499.10">
    <property type="entry name" value="Aconitase, domain 3"/>
    <property type="match status" value="2"/>
</dbReference>
<dbReference type="Gene3D" id="3.20.19.10">
    <property type="entry name" value="Aconitase, domain 4"/>
    <property type="match status" value="1"/>
</dbReference>
<dbReference type="InterPro" id="IPR015931">
    <property type="entry name" value="Acnase/IPM_dHydase_lsu_aba_1/3"/>
</dbReference>
<dbReference type="InterPro" id="IPR001030">
    <property type="entry name" value="Acoase/IPM_deHydtase_lsu_aba"/>
</dbReference>
<dbReference type="InterPro" id="IPR015928">
    <property type="entry name" value="Aconitase/3IPM_dehydase_swvl"/>
</dbReference>
<dbReference type="InterPro" id="IPR018136">
    <property type="entry name" value="Aconitase_4Fe-4S_BS"/>
</dbReference>
<dbReference type="InterPro" id="IPR036008">
    <property type="entry name" value="Aconitase_4Fe-4S_dom"/>
</dbReference>
<dbReference type="InterPro" id="IPR000573">
    <property type="entry name" value="AconitaseA/IPMdHydase_ssu_swvl"/>
</dbReference>
<dbReference type="InterPro" id="IPR004418">
    <property type="entry name" value="Homoaconitase_mito"/>
</dbReference>
<dbReference type="InterPro" id="IPR039386">
    <property type="entry name" value="Homoaconitase_swivel"/>
</dbReference>
<dbReference type="InterPro" id="IPR050067">
    <property type="entry name" value="IPM_dehydratase_rel_enz"/>
</dbReference>
<dbReference type="NCBIfam" id="TIGR00139">
    <property type="entry name" value="h_aconitase"/>
    <property type="match status" value="1"/>
</dbReference>
<dbReference type="PANTHER" id="PTHR43822:SF2">
    <property type="entry name" value="HOMOACONITASE, MITOCHONDRIAL"/>
    <property type="match status" value="1"/>
</dbReference>
<dbReference type="PANTHER" id="PTHR43822">
    <property type="entry name" value="HOMOACONITASE, MITOCHONDRIAL-RELATED"/>
    <property type="match status" value="1"/>
</dbReference>
<dbReference type="Pfam" id="PF00330">
    <property type="entry name" value="Aconitase"/>
    <property type="match status" value="1"/>
</dbReference>
<dbReference type="Pfam" id="PF00694">
    <property type="entry name" value="Aconitase_C"/>
    <property type="match status" value="1"/>
</dbReference>
<dbReference type="PRINTS" id="PR00415">
    <property type="entry name" value="ACONITASE"/>
</dbReference>
<dbReference type="SUPFAM" id="SSF53732">
    <property type="entry name" value="Aconitase iron-sulfur domain"/>
    <property type="match status" value="1"/>
</dbReference>
<dbReference type="SUPFAM" id="SSF52016">
    <property type="entry name" value="LeuD/IlvD-like"/>
    <property type="match status" value="1"/>
</dbReference>
<dbReference type="PROSITE" id="PS01244">
    <property type="entry name" value="ACONITASE_2"/>
    <property type="match status" value="1"/>
</dbReference>
<evidence type="ECO:0000250" key="1"/>
<evidence type="ECO:0000255" key="2"/>
<evidence type="ECO:0000305" key="3"/>
<keyword id="KW-0028">Amino-acid biosynthesis</keyword>
<keyword id="KW-0408">Iron</keyword>
<keyword id="KW-0411">Iron-sulfur</keyword>
<keyword id="KW-0456">Lyase</keyword>
<keyword id="KW-0457">Lysine biosynthesis</keyword>
<keyword id="KW-0479">Metal-binding</keyword>
<keyword id="KW-0496">Mitochondrion</keyword>
<keyword id="KW-1185">Reference proteome</keyword>
<keyword id="KW-0809">Transit peptide</keyword>